<protein>
    <recommendedName>
        <fullName evidence="3">ATP synthase delta chain, chloroplastic</fullName>
    </recommendedName>
    <alternativeName>
        <fullName>F-ATPase delta chain</fullName>
    </alternativeName>
</protein>
<proteinExistence type="evidence at protein level"/>
<dbReference type="EMBL" id="U41442">
    <property type="protein sequence ID" value="AAB51365.1"/>
    <property type="molecule type" value="mRNA"/>
</dbReference>
<dbReference type="PIR" id="S68391">
    <property type="entry name" value="S68391"/>
</dbReference>
<dbReference type="PIR" id="T08083">
    <property type="entry name" value="T08083"/>
</dbReference>
<dbReference type="RefSeq" id="XP_001701377.1">
    <property type="nucleotide sequence ID" value="XM_001701325.1"/>
</dbReference>
<dbReference type="SMR" id="Q42687"/>
<dbReference type="PaxDb" id="3055-EDO97493"/>
<dbReference type="ProMEX" id="Q42687"/>
<dbReference type="EnsemblPlants" id="PNW76414">
    <property type="protein sequence ID" value="PNW76414"/>
    <property type="gene ID" value="CHLRE_11g467569v5"/>
</dbReference>
<dbReference type="Gramene" id="PNW76414">
    <property type="protein sequence ID" value="PNW76414"/>
    <property type="gene ID" value="CHLRE_11g467569v5"/>
</dbReference>
<dbReference type="KEGG" id="cre:CHLRE_11g467569v5"/>
<dbReference type="eggNOG" id="KOG1662">
    <property type="taxonomic scope" value="Eukaryota"/>
</dbReference>
<dbReference type="HOGENOM" id="CLU_085114_1_0_1"/>
<dbReference type="OMA" id="WFDLEMK"/>
<dbReference type="OrthoDB" id="1262810at2759"/>
<dbReference type="BioCyc" id="CHLAMY:CHLREDRAFT_132678-MONOMER"/>
<dbReference type="GO" id="GO:0009535">
    <property type="term" value="C:chloroplast thylakoid membrane"/>
    <property type="evidence" value="ECO:0007669"/>
    <property type="project" value="UniProtKB-SubCell"/>
</dbReference>
<dbReference type="GO" id="GO:0045259">
    <property type="term" value="C:proton-transporting ATP synthase complex"/>
    <property type="evidence" value="ECO:0007669"/>
    <property type="project" value="UniProtKB-KW"/>
</dbReference>
<dbReference type="GO" id="GO:0046933">
    <property type="term" value="F:proton-transporting ATP synthase activity, rotational mechanism"/>
    <property type="evidence" value="ECO:0007669"/>
    <property type="project" value="InterPro"/>
</dbReference>
<dbReference type="Gene3D" id="1.10.520.20">
    <property type="entry name" value="N-terminal domain of the delta subunit of the F1F0-ATP synthase"/>
    <property type="match status" value="1"/>
</dbReference>
<dbReference type="HAMAP" id="MF_01416">
    <property type="entry name" value="ATP_synth_delta_bact"/>
    <property type="match status" value="1"/>
</dbReference>
<dbReference type="InterPro" id="IPR026015">
    <property type="entry name" value="ATP_synth_OSCP/delta_N_sf"/>
</dbReference>
<dbReference type="InterPro" id="IPR020781">
    <property type="entry name" value="ATPase_OSCP/d_CS"/>
</dbReference>
<dbReference type="InterPro" id="IPR000711">
    <property type="entry name" value="ATPase_OSCP/dsu"/>
</dbReference>
<dbReference type="NCBIfam" id="TIGR01145">
    <property type="entry name" value="ATP_synt_delta"/>
    <property type="match status" value="1"/>
</dbReference>
<dbReference type="PANTHER" id="PTHR11910">
    <property type="entry name" value="ATP SYNTHASE DELTA CHAIN"/>
    <property type="match status" value="1"/>
</dbReference>
<dbReference type="Pfam" id="PF00213">
    <property type="entry name" value="OSCP"/>
    <property type="match status" value="1"/>
</dbReference>
<dbReference type="PRINTS" id="PR00125">
    <property type="entry name" value="ATPASEDELTA"/>
</dbReference>
<dbReference type="SUPFAM" id="SSF47928">
    <property type="entry name" value="N-terminal domain of the delta subunit of the F1F0-ATP synthase"/>
    <property type="match status" value="1"/>
</dbReference>
<dbReference type="PROSITE" id="PS00389">
    <property type="entry name" value="ATPASE_DELTA"/>
    <property type="match status" value="1"/>
</dbReference>
<reference key="1">
    <citation type="online journal article" date="1996" name="Plant Gene Register">
        <title>Cloning and sequencing of a cDNA encoding the delta subunit precursor of photosynthetic ATP synthase (EC 3.6.3.14) from Chlamydomonas reinhardtii.</title>
        <authorList>
            <person name="Manthey R."/>
            <person name="Oworah-Nkruma R."/>
            <person name="Berzborn R.J."/>
        </authorList>
        <locator>PGR96-044</locator>
    </citation>
    <scope>NUCLEOTIDE SEQUENCE [MRNA]</scope>
    <scope>PROTEIN SEQUENCE OF 34-73</scope>
    <source>
        <strain>137c / CC-125</strain>
    </source>
</reference>
<reference key="2">
    <citation type="journal article" date="1995" name="FEBS Lett.">
        <title>Isolation of CF0CF1 from Chlamydomonas reinhardtii cw15 and the N-terminal amino acid sequences of the CF0CF1 subunits.</title>
        <authorList>
            <person name="Fiedler H.R."/>
            <person name="Schmid R."/>
            <person name="Leu S."/>
            <person name="Shavit N."/>
            <person name="Strotmann H."/>
        </authorList>
    </citation>
    <scope>PROTEIN SEQUENCE OF 34-57</scope>
    <scope>FUNCTION</scope>
    <scope>SUBUNIT</scope>
    <scope>SUBCELLULAR LOCATION</scope>
    <source>
        <strain>cw15</strain>
    </source>
</reference>
<evidence type="ECO:0000269" key="1">
    <source>
    </source>
</evidence>
<evidence type="ECO:0000269" key="2">
    <source ref="1"/>
</evidence>
<evidence type="ECO:0000303" key="3">
    <source>
    </source>
</evidence>
<evidence type="ECO:0000305" key="4"/>
<feature type="transit peptide" description="Chloroplast" evidence="1 2">
    <location>
        <begin position="1"/>
        <end position="33"/>
    </location>
</feature>
<feature type="chain" id="PRO_0000002638" description="ATP synthase delta chain, chloroplastic">
    <location>
        <begin position="34"/>
        <end position="219"/>
    </location>
</feature>
<comment type="function">
    <text evidence="1">F(1)F(0) ATP synthase produces ATP from ADP in the presence of a proton or sodium gradient. F-type ATPases consist of two structural domains, F(1) containing the extramembraneous catalytic core and F(0) containing the membrane proton channel, linked together by a central stalk and a peripheral stalk. During catalysis, ATP synthesis in the catalytic domain of F(1) is coupled via a rotary mechanism of the central stalk subunits to proton translocation.</text>
</comment>
<comment type="function">
    <text>This protein seems to be part of the stalk that links CF(0) to CF(1). It either transmits conformational changes from CF(0) into CF(1) or is implicated in proton conduction.</text>
</comment>
<comment type="subunit">
    <text evidence="1">F-type ATPases have 2 components, F(1) - the catalytic core - and F(0) - the membrane proton channel. F(1) has five subunits: alpha(3), beta(3), gamma(1), delta(1), epsilon(1). F(0) has four main subunits: a(1), b(1), b'(1) and c(10-14). The alpha and beta chains form an alternating ring which encloses part of the gamma chain. F(1) is attached to F(0) by a central stalk formed by the gamma and epsilon chains, while a peripheral stalk is formed by the delta, b and b' chains.</text>
</comment>
<comment type="subcellular location">
    <subcellularLocation>
        <location evidence="1">Plastid</location>
        <location evidence="1">Chloroplast thylakoid membrane</location>
    </subcellularLocation>
</comment>
<comment type="miscellaneous">
    <text evidence="4">In plastids the F-type ATPase is also known as CF(1)CF(0).</text>
</comment>
<comment type="similarity">
    <text evidence="4">Belongs to the ATPase delta chain family.</text>
</comment>
<sequence length="219" mass="23995">MLAAKSIAGPRAFKASAVRAAPKAGRRTVVVMARKNEVSESYAKALVELADEKGKLEAVHADVDAVAGLMKENAKLSALIMNPVVESDKKRAVLAKIAKEAGFQQYTINWLNLLVEKDRLSLVPEICECFEDLYCQMTDTQVATLRSAVKLEQEQQFLIAKKLQELTGSKNIKLKPVIDSSLIAGFVVEYGSSQIDLSVRGQIERVADQLTKEMTAKLS</sequence>
<accession>Q42687</accession>
<accession>Q9S883</accession>
<organism>
    <name type="scientific">Chlamydomonas reinhardtii</name>
    <name type="common">Chlamydomonas smithii</name>
    <dbReference type="NCBI Taxonomy" id="3055"/>
    <lineage>
        <taxon>Eukaryota</taxon>
        <taxon>Viridiplantae</taxon>
        <taxon>Chlorophyta</taxon>
        <taxon>core chlorophytes</taxon>
        <taxon>Chlorophyceae</taxon>
        <taxon>CS clade</taxon>
        <taxon>Chlamydomonadales</taxon>
        <taxon>Chlamydomonadaceae</taxon>
        <taxon>Chlamydomonas</taxon>
    </lineage>
</organism>
<gene>
    <name evidence="3" type="primary">ATPD</name>
</gene>
<keyword id="KW-0066">ATP synthesis</keyword>
<keyword id="KW-0139">CF(1)</keyword>
<keyword id="KW-0150">Chloroplast</keyword>
<keyword id="KW-0903">Direct protein sequencing</keyword>
<keyword id="KW-0375">Hydrogen ion transport</keyword>
<keyword id="KW-0406">Ion transport</keyword>
<keyword id="KW-0472">Membrane</keyword>
<keyword id="KW-0934">Plastid</keyword>
<keyword id="KW-0793">Thylakoid</keyword>
<keyword id="KW-0809">Transit peptide</keyword>
<keyword id="KW-0813">Transport</keyword>
<name>ATPD_CHLRE</name>